<gene>
    <name evidence="1" type="primary">araB</name>
    <name type="ordered locus">SNSL254_A0110</name>
</gene>
<proteinExistence type="inferred from homology"/>
<evidence type="ECO:0000255" key="1">
    <source>
        <dbReference type="HAMAP-Rule" id="MF_00520"/>
    </source>
</evidence>
<dbReference type="EC" id="2.7.1.16" evidence="1"/>
<dbReference type="EMBL" id="CP001113">
    <property type="protein sequence ID" value="ACF64618.1"/>
    <property type="molecule type" value="Genomic_DNA"/>
</dbReference>
<dbReference type="RefSeq" id="WP_000951820.1">
    <property type="nucleotide sequence ID" value="NZ_CCMR01000003.1"/>
</dbReference>
<dbReference type="SMR" id="B4SU24"/>
<dbReference type="KEGG" id="see:SNSL254_A0110"/>
<dbReference type="HOGENOM" id="CLU_009281_9_1_6"/>
<dbReference type="UniPathway" id="UPA00145">
    <property type="reaction ID" value="UER00566"/>
</dbReference>
<dbReference type="Proteomes" id="UP000008824">
    <property type="component" value="Chromosome"/>
</dbReference>
<dbReference type="GO" id="GO:0005737">
    <property type="term" value="C:cytoplasm"/>
    <property type="evidence" value="ECO:0007669"/>
    <property type="project" value="TreeGrafter"/>
</dbReference>
<dbReference type="GO" id="GO:0005524">
    <property type="term" value="F:ATP binding"/>
    <property type="evidence" value="ECO:0007669"/>
    <property type="project" value="UniProtKB-KW"/>
</dbReference>
<dbReference type="GO" id="GO:0019150">
    <property type="term" value="F:D-ribulokinase activity"/>
    <property type="evidence" value="ECO:0007669"/>
    <property type="project" value="TreeGrafter"/>
</dbReference>
<dbReference type="GO" id="GO:0008741">
    <property type="term" value="F:ribulokinase activity"/>
    <property type="evidence" value="ECO:0007669"/>
    <property type="project" value="UniProtKB-UniRule"/>
</dbReference>
<dbReference type="GO" id="GO:0019569">
    <property type="term" value="P:L-arabinose catabolic process to xylulose 5-phosphate"/>
    <property type="evidence" value="ECO:0007669"/>
    <property type="project" value="UniProtKB-UniRule"/>
</dbReference>
<dbReference type="CDD" id="cd07781">
    <property type="entry name" value="ASKHA_NBD_FGGY_L-RBK"/>
    <property type="match status" value="1"/>
</dbReference>
<dbReference type="Gene3D" id="1.20.58.2240">
    <property type="match status" value="1"/>
</dbReference>
<dbReference type="Gene3D" id="3.30.420.40">
    <property type="match status" value="1"/>
</dbReference>
<dbReference type="HAMAP" id="MF_00520">
    <property type="entry name" value="Ribulokinase"/>
    <property type="match status" value="1"/>
</dbReference>
<dbReference type="InterPro" id="IPR043129">
    <property type="entry name" value="ATPase_NBD"/>
</dbReference>
<dbReference type="InterPro" id="IPR018485">
    <property type="entry name" value="FGGY_C"/>
</dbReference>
<dbReference type="InterPro" id="IPR005929">
    <property type="entry name" value="Ribulokinase"/>
</dbReference>
<dbReference type="NCBIfam" id="TIGR01234">
    <property type="entry name" value="L-ribulokinase"/>
    <property type="match status" value="1"/>
</dbReference>
<dbReference type="NCBIfam" id="NF003154">
    <property type="entry name" value="PRK04123.1"/>
    <property type="match status" value="1"/>
</dbReference>
<dbReference type="PANTHER" id="PTHR43435:SF4">
    <property type="entry name" value="FGGY CARBOHYDRATE KINASE DOMAIN-CONTAINING PROTEIN"/>
    <property type="match status" value="1"/>
</dbReference>
<dbReference type="PANTHER" id="PTHR43435">
    <property type="entry name" value="RIBULOKINASE"/>
    <property type="match status" value="1"/>
</dbReference>
<dbReference type="Pfam" id="PF02782">
    <property type="entry name" value="FGGY_C"/>
    <property type="match status" value="1"/>
</dbReference>
<dbReference type="SUPFAM" id="SSF53067">
    <property type="entry name" value="Actin-like ATPase domain"/>
    <property type="match status" value="2"/>
</dbReference>
<reference key="1">
    <citation type="journal article" date="2011" name="J. Bacteriol.">
        <title>Comparative genomics of 28 Salmonella enterica isolates: evidence for CRISPR-mediated adaptive sublineage evolution.</title>
        <authorList>
            <person name="Fricke W.F."/>
            <person name="Mammel M.K."/>
            <person name="McDermott P.F."/>
            <person name="Tartera C."/>
            <person name="White D.G."/>
            <person name="Leclerc J.E."/>
            <person name="Ravel J."/>
            <person name="Cebula T.A."/>
        </authorList>
    </citation>
    <scope>NUCLEOTIDE SEQUENCE [LARGE SCALE GENOMIC DNA]</scope>
    <source>
        <strain>SL254</strain>
    </source>
</reference>
<name>ARAB_SALNS</name>
<sequence length="569" mass="61697">MAIAIGLDFGSDSVRALAVDCATGDEIATSVEWYPRWQEGRYCDGPNNQFRHHPRDYMESMEAALKAVLAQLSAAQRANVVGIGVDSTGSTPAPIDADGNVLALRPEFAENPNAMFVLWKDHTAVEEADEITRLCHKPGKVDYSRYIGGIYSSEWFWAKILHVTRQDSAVAQAAVSWIELCDWVPALLSGTTRPQDIRRGRCSAGHKTLWHESWGGLPPASFFDELDPCINRHLRYPLFSETFTADLPVGTLCAEWAQRLGLPESVVISGGAFDCHMGAVGAGAQPNTLVKVIGTSTCDILIADKQSVGDRAVKGICGQVDGSVVPNFIGLEAGQSAFGDIYAWFSRVLSWPLEQLAAQHPELKTQINASQKQLLPALTDAWAKNPSLDHLPVVLDWFNGRRTPNANQRLKGVITDLNLATDAPALFGGLVASTAFGARAIQECFTEQGIAVNNVMALGGIARKNQVIMQVCCDVLNRPLQIVASDQCCALGAAIFAAVAAKVHADIPAAQQSMASAVERTLRPRPEQAQRLEQLYRRYQQWALSAEQHYLPTAAPAPTTPANQAILTH</sequence>
<accession>B4SU24</accession>
<organism>
    <name type="scientific">Salmonella newport (strain SL254)</name>
    <dbReference type="NCBI Taxonomy" id="423368"/>
    <lineage>
        <taxon>Bacteria</taxon>
        <taxon>Pseudomonadati</taxon>
        <taxon>Pseudomonadota</taxon>
        <taxon>Gammaproteobacteria</taxon>
        <taxon>Enterobacterales</taxon>
        <taxon>Enterobacteriaceae</taxon>
        <taxon>Salmonella</taxon>
    </lineage>
</organism>
<keyword id="KW-0054">Arabinose catabolism</keyword>
<keyword id="KW-0067">ATP-binding</keyword>
<keyword id="KW-0119">Carbohydrate metabolism</keyword>
<keyword id="KW-0418">Kinase</keyword>
<keyword id="KW-0547">Nucleotide-binding</keyword>
<keyword id="KW-0808">Transferase</keyword>
<feature type="chain" id="PRO_1000127641" description="Ribulokinase">
    <location>
        <begin position="1"/>
        <end position="569"/>
    </location>
</feature>
<comment type="catalytic activity">
    <reaction evidence="1">
        <text>D-ribulose + ATP = D-ribulose 5-phosphate + ADP + H(+)</text>
        <dbReference type="Rhea" id="RHEA:17601"/>
        <dbReference type="ChEBI" id="CHEBI:15378"/>
        <dbReference type="ChEBI" id="CHEBI:17173"/>
        <dbReference type="ChEBI" id="CHEBI:30616"/>
        <dbReference type="ChEBI" id="CHEBI:58121"/>
        <dbReference type="ChEBI" id="CHEBI:456216"/>
        <dbReference type="EC" id="2.7.1.16"/>
    </reaction>
</comment>
<comment type="catalytic activity">
    <reaction evidence="1">
        <text>L-ribulose + ATP = L-ribulose 5-phosphate + ADP + H(+)</text>
        <dbReference type="Rhea" id="RHEA:22072"/>
        <dbReference type="ChEBI" id="CHEBI:15378"/>
        <dbReference type="ChEBI" id="CHEBI:16880"/>
        <dbReference type="ChEBI" id="CHEBI:30616"/>
        <dbReference type="ChEBI" id="CHEBI:58226"/>
        <dbReference type="ChEBI" id="CHEBI:456216"/>
        <dbReference type="EC" id="2.7.1.16"/>
    </reaction>
</comment>
<comment type="pathway">
    <text evidence="1">Carbohydrate degradation; L-arabinose degradation via L-ribulose; D-xylulose 5-phosphate from L-arabinose (bacterial route): step 2/3.</text>
</comment>
<comment type="similarity">
    <text evidence="1">Belongs to the ribulokinase family.</text>
</comment>
<protein>
    <recommendedName>
        <fullName evidence="1">Ribulokinase</fullName>
        <ecNumber evidence="1">2.7.1.16</ecNumber>
    </recommendedName>
</protein>